<protein>
    <recommendedName>
        <fullName>Vacuolar amino acid transporter 5</fullName>
    </recommendedName>
</protein>
<reference key="1">
    <citation type="journal article" date="1995" name="Yeast">
        <title>Sequence analysis of a 78.6 kb segment of the left end of Saccharomyces cerevisiae chromosome II.</title>
        <authorList>
            <person name="Obermaier B."/>
            <person name="Gassenhuber J."/>
            <person name="Piravandi E."/>
            <person name="Domdey H."/>
        </authorList>
    </citation>
    <scope>NUCLEOTIDE SEQUENCE [GENOMIC DNA]</scope>
    <source>
        <strain>ATCC 204508 / S288c</strain>
    </source>
</reference>
<reference key="2">
    <citation type="journal article" date="1994" name="EMBO J.">
        <title>Complete DNA sequence of yeast chromosome II.</title>
        <authorList>
            <person name="Feldmann H."/>
            <person name="Aigle M."/>
            <person name="Aljinovic G."/>
            <person name="Andre B."/>
            <person name="Baclet M.C."/>
            <person name="Barthe C."/>
            <person name="Baur A."/>
            <person name="Becam A.-M."/>
            <person name="Biteau N."/>
            <person name="Boles E."/>
            <person name="Brandt T."/>
            <person name="Brendel M."/>
            <person name="Brueckner M."/>
            <person name="Bussereau F."/>
            <person name="Christiansen C."/>
            <person name="Contreras R."/>
            <person name="Crouzet M."/>
            <person name="Cziepluch C."/>
            <person name="Demolis N."/>
            <person name="Delaveau T."/>
            <person name="Doignon F."/>
            <person name="Domdey H."/>
            <person name="Duesterhus S."/>
            <person name="Dubois E."/>
            <person name="Dujon B."/>
            <person name="El Bakkoury M."/>
            <person name="Entian K.-D."/>
            <person name="Feuermann M."/>
            <person name="Fiers W."/>
            <person name="Fobo G.M."/>
            <person name="Fritz C."/>
            <person name="Gassenhuber J."/>
            <person name="Glansdorff N."/>
            <person name="Goffeau A."/>
            <person name="Grivell L.A."/>
            <person name="de Haan M."/>
            <person name="Hein C."/>
            <person name="Herbert C.J."/>
            <person name="Hollenberg C.P."/>
            <person name="Holmstroem K."/>
            <person name="Jacq C."/>
            <person name="Jacquet M."/>
            <person name="Jauniaux J.-C."/>
            <person name="Jonniaux J.-L."/>
            <person name="Kallesoee T."/>
            <person name="Kiesau P."/>
            <person name="Kirchrath L."/>
            <person name="Koetter P."/>
            <person name="Korol S."/>
            <person name="Liebl S."/>
            <person name="Logghe M."/>
            <person name="Lohan A.J.E."/>
            <person name="Louis E.J."/>
            <person name="Li Z.Y."/>
            <person name="Maat M.J."/>
            <person name="Mallet L."/>
            <person name="Mannhaupt G."/>
            <person name="Messenguy F."/>
            <person name="Miosga T."/>
            <person name="Molemans F."/>
            <person name="Mueller S."/>
            <person name="Nasr F."/>
            <person name="Obermaier B."/>
            <person name="Perea J."/>
            <person name="Pierard A."/>
            <person name="Piravandi E."/>
            <person name="Pohl F.M."/>
            <person name="Pohl T.M."/>
            <person name="Potier S."/>
            <person name="Proft M."/>
            <person name="Purnelle B."/>
            <person name="Ramezani Rad M."/>
            <person name="Rieger M."/>
            <person name="Rose M."/>
            <person name="Schaaff-Gerstenschlaeger I."/>
            <person name="Scherens B."/>
            <person name="Schwarzlose C."/>
            <person name="Skala J."/>
            <person name="Slonimski P.P."/>
            <person name="Smits P.H.M."/>
            <person name="Souciet J.-L."/>
            <person name="Steensma H.Y."/>
            <person name="Stucka R."/>
            <person name="Urrestarazu L.A."/>
            <person name="van der Aart Q.J.M."/>
            <person name="Van Dyck L."/>
            <person name="Vassarotti A."/>
            <person name="Vetter I."/>
            <person name="Vierendeels F."/>
            <person name="Vissers S."/>
            <person name="Wagner G."/>
            <person name="de Wergifosse P."/>
            <person name="Wolfe K.H."/>
            <person name="Zagulski M."/>
            <person name="Zimmermann F.K."/>
            <person name="Mewes H.-W."/>
            <person name="Kleine K."/>
        </authorList>
    </citation>
    <scope>NUCLEOTIDE SEQUENCE [LARGE SCALE GENOMIC DNA]</scope>
    <source>
        <strain>ATCC 204508 / S288c</strain>
    </source>
</reference>
<reference key="3">
    <citation type="journal article" date="2014" name="G3 (Bethesda)">
        <title>The reference genome sequence of Saccharomyces cerevisiae: Then and now.</title>
        <authorList>
            <person name="Engel S.R."/>
            <person name="Dietrich F.S."/>
            <person name="Fisk D.G."/>
            <person name="Binkley G."/>
            <person name="Balakrishnan R."/>
            <person name="Costanzo M.C."/>
            <person name="Dwight S.S."/>
            <person name="Hitz B.C."/>
            <person name="Karra K."/>
            <person name="Nash R.S."/>
            <person name="Weng S."/>
            <person name="Wong E.D."/>
            <person name="Lloyd P."/>
            <person name="Skrzypek M.S."/>
            <person name="Miyasato S.R."/>
            <person name="Simison M."/>
            <person name="Cherry J.M."/>
        </authorList>
    </citation>
    <scope>GENOME REANNOTATION</scope>
    <source>
        <strain>ATCC 204508 / S288c</strain>
    </source>
</reference>
<reference key="4">
    <citation type="journal article" date="2001" name="J. Biol. Chem.">
        <title>A family of yeast proteins mediating bidirectional vacuolar amino acid transport.</title>
        <authorList>
            <person name="Russnak R."/>
            <person name="Konczal D."/>
            <person name="McIntire S.L."/>
        </authorList>
    </citation>
    <scope>FUNCTION</scope>
    <scope>SUBCELLULAR LOCATION</scope>
</reference>
<reference key="5">
    <citation type="journal article" date="2003" name="Nature">
        <title>Sequencing and comparison of yeast species to identify genes and regulatory elements.</title>
        <authorList>
            <person name="Kellis M."/>
            <person name="Patterson N."/>
            <person name="Endrizzi M."/>
            <person name="Birren B.W."/>
            <person name="Lander E.S."/>
        </authorList>
    </citation>
    <scope>IDENTIFICATION OF PROBABLE INITIATION SITE</scope>
</reference>
<comment type="function">
    <text evidence="3">Probable amino acid transporter of unknown specificity.</text>
</comment>
<comment type="subcellular location">
    <subcellularLocation>
        <location evidence="3">Vacuole membrane</location>
        <topology evidence="3">Multi-pass membrane protein</topology>
    </subcellularLocation>
</comment>
<comment type="similarity">
    <text evidence="4">Belongs to the amino acid/polyamine transporter 2 family.</text>
</comment>
<dbReference type="EMBL" id="X79489">
    <property type="protein sequence ID" value="CAA56013.1"/>
    <property type="molecule type" value="Genomic_DNA"/>
</dbReference>
<dbReference type="EMBL" id="Z35850">
    <property type="protein sequence ID" value="CAA84910.1"/>
    <property type="molecule type" value="Genomic_DNA"/>
</dbReference>
<dbReference type="EMBL" id="BK006936">
    <property type="protein sequence ID" value="DAA07035.1"/>
    <property type="molecule type" value="Genomic_DNA"/>
</dbReference>
<dbReference type="PIR" id="S45413">
    <property type="entry name" value="S45413"/>
</dbReference>
<dbReference type="RefSeq" id="NP_009464.2">
    <property type="nucleotide sequence ID" value="NM_001178329.1"/>
</dbReference>
<dbReference type="BioGRID" id="32615">
    <property type="interactions" value="191"/>
</dbReference>
<dbReference type="DIP" id="DIP-2846N"/>
<dbReference type="FunCoup" id="P38176">
    <property type="interactions" value="290"/>
</dbReference>
<dbReference type="IntAct" id="P38176">
    <property type="interactions" value="4"/>
</dbReference>
<dbReference type="MINT" id="P38176"/>
<dbReference type="STRING" id="4932.YBL089W"/>
<dbReference type="TCDB" id="2.A.18.6.10">
    <property type="family name" value="the amino acid/auxin permease (aaap) family"/>
</dbReference>
<dbReference type="PaxDb" id="4932-YBL089W"/>
<dbReference type="PeptideAtlas" id="P38176"/>
<dbReference type="EnsemblFungi" id="YBL089W_mRNA">
    <property type="protein sequence ID" value="YBL089W"/>
    <property type="gene ID" value="YBL089W"/>
</dbReference>
<dbReference type="GeneID" id="852189"/>
<dbReference type="KEGG" id="sce:YBL089W"/>
<dbReference type="AGR" id="SGD:S000000185"/>
<dbReference type="SGD" id="S000000185">
    <property type="gene designation" value="AVT5"/>
</dbReference>
<dbReference type="VEuPathDB" id="FungiDB:YBL089W"/>
<dbReference type="eggNOG" id="KOG1305">
    <property type="taxonomic scope" value="Eukaryota"/>
</dbReference>
<dbReference type="GeneTree" id="ENSGT00940000170090"/>
<dbReference type="HOGENOM" id="CLU_009020_1_1_1"/>
<dbReference type="InParanoid" id="P38176"/>
<dbReference type="OMA" id="KARMQNV"/>
<dbReference type="OrthoDB" id="438545at2759"/>
<dbReference type="BioCyc" id="YEAST:G3O-28978-MONOMER"/>
<dbReference type="BioGRID-ORCS" id="852189">
    <property type="hits" value="6 hits in 10 CRISPR screens"/>
</dbReference>
<dbReference type="PRO" id="PR:P38176"/>
<dbReference type="Proteomes" id="UP000002311">
    <property type="component" value="Chromosome II"/>
</dbReference>
<dbReference type="RNAct" id="P38176">
    <property type="molecule type" value="protein"/>
</dbReference>
<dbReference type="GO" id="GO:0000329">
    <property type="term" value="C:fungal-type vacuole membrane"/>
    <property type="evidence" value="ECO:0000318"/>
    <property type="project" value="GO_Central"/>
</dbReference>
<dbReference type="GO" id="GO:0016020">
    <property type="term" value="C:membrane"/>
    <property type="evidence" value="ECO:0000250"/>
    <property type="project" value="SGD"/>
</dbReference>
<dbReference type="GO" id="GO:0061459">
    <property type="term" value="F:L-arginine transmembrane transporter activity"/>
    <property type="evidence" value="ECO:0000318"/>
    <property type="project" value="GO_Central"/>
</dbReference>
<dbReference type="GO" id="GO:0005313">
    <property type="term" value="F:L-glutamate transmembrane transporter activity"/>
    <property type="evidence" value="ECO:0000318"/>
    <property type="project" value="GO_Central"/>
</dbReference>
<dbReference type="GO" id="GO:0005290">
    <property type="term" value="F:L-histidine transmembrane transporter activity"/>
    <property type="evidence" value="ECO:0000318"/>
    <property type="project" value="GO_Central"/>
</dbReference>
<dbReference type="GO" id="GO:0015189">
    <property type="term" value="F:L-lysine transmembrane transporter activity"/>
    <property type="evidence" value="ECO:0000318"/>
    <property type="project" value="GO_Central"/>
</dbReference>
<dbReference type="GO" id="GO:0015194">
    <property type="term" value="F:L-serine transmembrane transporter activity"/>
    <property type="evidence" value="ECO:0000318"/>
    <property type="project" value="GO_Central"/>
</dbReference>
<dbReference type="GO" id="GO:0005302">
    <property type="term" value="F:L-tyrosine transmembrane transporter activity"/>
    <property type="evidence" value="ECO:0000318"/>
    <property type="project" value="GO_Central"/>
</dbReference>
<dbReference type="GO" id="GO:0022857">
    <property type="term" value="F:transmembrane transporter activity"/>
    <property type="evidence" value="ECO:0000250"/>
    <property type="project" value="SGD"/>
</dbReference>
<dbReference type="GO" id="GO:0003333">
    <property type="term" value="P:amino acid transmembrane transport"/>
    <property type="evidence" value="ECO:0000318"/>
    <property type="project" value="GO_Central"/>
</dbReference>
<dbReference type="GO" id="GO:0055085">
    <property type="term" value="P:transmembrane transport"/>
    <property type="evidence" value="ECO:0000250"/>
    <property type="project" value="SGD"/>
</dbReference>
<dbReference type="InterPro" id="IPR013057">
    <property type="entry name" value="AA_transpt_TM"/>
</dbReference>
<dbReference type="PANTHER" id="PTHR22950">
    <property type="entry name" value="AMINO ACID TRANSPORTER"/>
    <property type="match status" value="1"/>
</dbReference>
<dbReference type="PANTHER" id="PTHR22950:SF678">
    <property type="entry name" value="VACUOLAR AMINO ACID TRANSPORTER 5-RELATED"/>
    <property type="match status" value="1"/>
</dbReference>
<dbReference type="Pfam" id="PF01490">
    <property type="entry name" value="Aa_trans"/>
    <property type="match status" value="1"/>
</dbReference>
<accession>P38176</accession>
<accession>D6VPR5</accession>
<organism>
    <name type="scientific">Saccharomyces cerevisiae (strain ATCC 204508 / S288c)</name>
    <name type="common">Baker's yeast</name>
    <dbReference type="NCBI Taxonomy" id="559292"/>
    <lineage>
        <taxon>Eukaryota</taxon>
        <taxon>Fungi</taxon>
        <taxon>Dikarya</taxon>
        <taxon>Ascomycota</taxon>
        <taxon>Saccharomycotina</taxon>
        <taxon>Saccharomycetes</taxon>
        <taxon>Saccharomycetales</taxon>
        <taxon>Saccharomycetaceae</taxon>
        <taxon>Saccharomyces</taxon>
    </lineage>
</organism>
<feature type="chain" id="PRO_0000093838" description="Vacuolar amino acid transporter 5">
    <location>
        <begin position="1"/>
        <end position="459"/>
    </location>
</feature>
<feature type="transmembrane region" description="Helical" evidence="1">
    <location>
        <begin position="8"/>
        <end position="28"/>
    </location>
</feature>
<feature type="transmembrane region" description="Helical" evidence="1">
    <location>
        <begin position="33"/>
        <end position="53"/>
    </location>
</feature>
<feature type="transmembrane region" description="Helical" evidence="1">
    <location>
        <begin position="82"/>
        <end position="102"/>
    </location>
</feature>
<feature type="transmembrane region" description="Helical" evidence="1">
    <location>
        <begin position="131"/>
        <end position="151"/>
    </location>
</feature>
<feature type="transmembrane region" description="Helical" evidence="1">
    <location>
        <begin position="161"/>
        <end position="181"/>
    </location>
</feature>
<feature type="transmembrane region" description="Helical" evidence="1">
    <location>
        <begin position="206"/>
        <end position="226"/>
    </location>
</feature>
<feature type="transmembrane region" description="Helical" evidence="1">
    <location>
        <begin position="240"/>
        <end position="260"/>
    </location>
</feature>
<feature type="transmembrane region" description="Helical" evidence="1">
    <location>
        <begin position="278"/>
        <end position="298"/>
    </location>
</feature>
<feature type="transmembrane region" description="Helical" evidence="1">
    <location>
        <begin position="364"/>
        <end position="384"/>
    </location>
</feature>
<feature type="transmembrane region" description="Helical" evidence="1">
    <location>
        <begin position="386"/>
        <end position="406"/>
    </location>
</feature>
<feature type="transmembrane region" description="Helical" evidence="1">
    <location>
        <begin position="434"/>
        <end position="454"/>
    </location>
</feature>
<feature type="region of interest" description="Disordered" evidence="2">
    <location>
        <begin position="335"/>
        <end position="354"/>
    </location>
</feature>
<feature type="compositionally biased region" description="Polar residues" evidence="2">
    <location>
        <begin position="335"/>
        <end position="351"/>
    </location>
</feature>
<proteinExistence type="inferred from homology"/>
<evidence type="ECO:0000255" key="1"/>
<evidence type="ECO:0000256" key="2">
    <source>
        <dbReference type="SAM" id="MobiDB-lite"/>
    </source>
</evidence>
<evidence type="ECO:0000269" key="3">
    <source>
    </source>
</evidence>
<evidence type="ECO:0000305" key="4"/>
<gene>
    <name type="primary">AVT5</name>
    <name type="ordered locus">YBL089W</name>
    <name type="ORF">YBL0703</name>
</gene>
<keyword id="KW-0029">Amino-acid transport</keyword>
<keyword id="KW-0472">Membrane</keyword>
<keyword id="KW-1185">Reference proteome</keyword>
<keyword id="KW-0812">Transmembrane</keyword>
<keyword id="KW-1133">Transmembrane helix</keyword>
<keyword id="KW-0813">Transport</keyword>
<keyword id="KW-0926">Vacuole</keyword>
<name>AVT5_YEAST</name>
<sequence length="459" mass="50892">MPSNVRSGVLTLLHTACGAGVLAMPFAFKPFGLMPGLITLTFCGICSLCGLLLQTRIAKYVPKSENASFAKLTQLINPSISVVFDFAIAVKCFGVGVSYLIIVGDLVPQIVQSIFYRNDDNMSGSQEHHMFLDRRLYITLIIVFVISPLCFKRSLNSLRYASMIAIVSVAYLSGLIIYHFVNRHQLERGQVYFMVPHGDSQSHSPLTTLPIFVFAYTCHHNMFSVINEQVDKSFKVIRRIPIFAIVLAYFLYIIIGGTGYMTFGENIVGNILTLYPNSISTTIGRLAMLLLVMLAFPLQCHPCRSSVKNIIIFIENFRKGKLYDNRASFIPLDNFNSEDPQEAPTQQNNEEPNLRSESLRHINIITLCILLFSYLLAISITSLAKVLAIVGATGSTSISFILPGLFGYKLIGSEFTGTNERVPTSIKIFKYLSLSLFIWGIAVMVASLSAIVFLGTSSH</sequence>